<gene>
    <name evidence="1" type="primary">dnaE2</name>
    <name type="ordered locus">BR0069</name>
    <name type="ordered locus">BS1330_I0069</name>
</gene>
<keyword id="KW-0963">Cytoplasm</keyword>
<keyword id="KW-0227">DNA damage</keyword>
<keyword id="KW-0234">DNA repair</keyword>
<keyword id="KW-0235">DNA replication</keyword>
<keyword id="KW-0239">DNA-directed DNA polymerase</keyword>
<keyword id="KW-0548">Nucleotidyltransferase</keyword>
<keyword id="KW-0808">Transferase</keyword>
<evidence type="ECO:0000255" key="1">
    <source>
        <dbReference type="HAMAP-Rule" id="MF_01902"/>
    </source>
</evidence>
<comment type="function">
    <text evidence="1">DNA polymerase involved in damage-induced mutagenesis and translesion synthesis (TLS). It is not the major replicative DNA polymerase.</text>
</comment>
<comment type="catalytic activity">
    <reaction evidence="1">
        <text>DNA(n) + a 2'-deoxyribonucleoside 5'-triphosphate = DNA(n+1) + diphosphate</text>
        <dbReference type="Rhea" id="RHEA:22508"/>
        <dbReference type="Rhea" id="RHEA-COMP:17339"/>
        <dbReference type="Rhea" id="RHEA-COMP:17340"/>
        <dbReference type="ChEBI" id="CHEBI:33019"/>
        <dbReference type="ChEBI" id="CHEBI:61560"/>
        <dbReference type="ChEBI" id="CHEBI:173112"/>
        <dbReference type="EC" id="2.7.7.7"/>
    </reaction>
</comment>
<comment type="subcellular location">
    <subcellularLocation>
        <location evidence="1">Cytoplasm</location>
    </subcellularLocation>
</comment>
<comment type="similarity">
    <text evidence="1">Belongs to the DNA polymerase type-C family. DnaE2 subfamily.</text>
</comment>
<protein>
    <recommendedName>
        <fullName evidence="1">Error-prone DNA polymerase</fullName>
        <ecNumber evidence="1">2.7.7.7</ecNumber>
    </recommendedName>
</protein>
<reference key="1">
    <citation type="journal article" date="2002" name="Proc. Natl. Acad. Sci. U.S.A.">
        <title>The Brucella suis genome reveals fundamental similarities between animal and plant pathogens and symbionts.</title>
        <authorList>
            <person name="Paulsen I.T."/>
            <person name="Seshadri R."/>
            <person name="Nelson K.E."/>
            <person name="Eisen J.A."/>
            <person name="Heidelberg J.F."/>
            <person name="Read T.D."/>
            <person name="Dodson R.J."/>
            <person name="Umayam L.A."/>
            <person name="Brinkac L.M."/>
            <person name="Beanan M.J."/>
            <person name="Daugherty S.C."/>
            <person name="DeBoy R.T."/>
            <person name="Durkin A.S."/>
            <person name="Kolonay J.F."/>
            <person name="Madupu R."/>
            <person name="Nelson W.C."/>
            <person name="Ayodeji B."/>
            <person name="Kraul M."/>
            <person name="Shetty J."/>
            <person name="Malek J.A."/>
            <person name="Van Aken S.E."/>
            <person name="Riedmuller S."/>
            <person name="Tettelin H."/>
            <person name="Gill S.R."/>
            <person name="White O."/>
            <person name="Salzberg S.L."/>
            <person name="Hoover D.L."/>
            <person name="Lindler L.E."/>
            <person name="Halling S.M."/>
            <person name="Boyle S.M."/>
            <person name="Fraser C.M."/>
        </authorList>
    </citation>
    <scope>NUCLEOTIDE SEQUENCE [LARGE SCALE GENOMIC DNA]</scope>
    <source>
        <strain>1330</strain>
    </source>
</reference>
<reference key="2">
    <citation type="journal article" date="2011" name="J. Bacteriol.">
        <title>Revised genome sequence of Brucella suis 1330.</title>
        <authorList>
            <person name="Tae H."/>
            <person name="Shallom S."/>
            <person name="Settlage R."/>
            <person name="Preston D."/>
            <person name="Adams L.G."/>
            <person name="Garner H.R."/>
        </authorList>
    </citation>
    <scope>NUCLEOTIDE SEQUENCE [LARGE SCALE GENOMIC DNA]</scope>
    <source>
        <strain>1330</strain>
    </source>
</reference>
<sequence length="1077" mass="120961">MVPYFEMAAASNFSFLCGASHPQELVERAHALDLSGIGIADRNTLAGVVRAHAQWKDIRKESGFRLFIGCRLSFIDGTPDMVVYPRDRAAYGQLCRLLTEGKHRAAIKGECHLEWADLLFRARQFQIAVFPPDEDEPDFAARLTEIAQAAPGSVWLALTMPHQGQDGRRAERIARFAAQAGVPLIATNDVLYHHPDRRPLQDVLTATRHHTTVFAAGRLLEKNAERHLKPPHEMVRLFRDYPEAIAATADFVAPITFQLDELKYAYPDEPIPPGKTAQQHLYDLVWEGAARHYGADIIPPKVQGLINKELALIARLEYEPYFLTVYDIVTHAREKGILCQGRGSAANSVVCFCLGITGVNPTQVDLLFERFISAERKEPPDIDVDFEHERREEVMQYVYDRYSRDRAAIVATVISYRSRSAIRDVGKALGLSEDVTAALANTVWGLSGGGIDRQHIRQAGLDPDNPIIQRAVELAITLIGFPRHLSQHVGGFVLARDRLDETVPIGPAAMDKRSFIEWDKDDIDEVGLMKVDVLSLGMLTCIRKAFDLIHQHKPQLYGGEKLTLASLPREDKAVYDMLCKGDSLGVFQVESRAQMNMLPRLRPQEFYDLVIEVAIVRPGPIQGDMVHPYLRRRSGQEPCTLPSPSPQHGPANELQQILGKTKGVPLFQEQAMRIAMEAAKFTPEEANQLRRAMATFRKMGTIHTMEKKMIDGMVNRGYDRTFAENCFNQIKGFGEYGFPESHAASFAHLVYISAWLKCHHPEVFAAALLNSQPMVFYAPAQIVRDAREHGVTVLPVDVNFSQWDNILEETPDVHLALRLGFRQIDGFSKRDTELLIADRQEPYRTIEDMHRRLRLDRRAFTLLADADAFGSLDIDRRAALWAVRRLPNDETLPLFRAAAASELAQEPRTKLPEMAASEHVIADYETTRLSLKGHPLQYLREGLAAEGVSTCRAVQEGADGRRMKVAGVVTVRQRPGSAKGVVFLTIEDETGIANIVIWPKIMKVFRREVMSARLIHIEGRIQRSLEGVVHLVAAKLQDRSAALIEMSGREAQRLIAPSQMAHHPRNVRVMPNSRDFH</sequence>
<feature type="chain" id="PRO_0000103372" description="Error-prone DNA polymerase">
    <location>
        <begin position="1"/>
        <end position="1077"/>
    </location>
</feature>
<organism>
    <name type="scientific">Brucella suis biovar 1 (strain 1330)</name>
    <dbReference type="NCBI Taxonomy" id="204722"/>
    <lineage>
        <taxon>Bacteria</taxon>
        <taxon>Pseudomonadati</taxon>
        <taxon>Pseudomonadota</taxon>
        <taxon>Alphaproteobacteria</taxon>
        <taxon>Hyphomicrobiales</taxon>
        <taxon>Brucellaceae</taxon>
        <taxon>Brucella/Ochrobactrum group</taxon>
        <taxon>Brucella</taxon>
    </lineage>
</organism>
<proteinExistence type="inferred from homology"/>
<accession>Q8G381</accession>
<accession>G0KAW7</accession>
<dbReference type="EC" id="2.7.7.7" evidence="1"/>
<dbReference type="EMBL" id="AE014291">
    <property type="protein sequence ID" value="AAN29026.1"/>
    <property type="molecule type" value="Genomic_DNA"/>
</dbReference>
<dbReference type="EMBL" id="CP002997">
    <property type="protein sequence ID" value="AEM17438.1"/>
    <property type="molecule type" value="Genomic_DNA"/>
</dbReference>
<dbReference type="RefSeq" id="WP_006191135.1">
    <property type="nucleotide sequence ID" value="NZ_KN046804.1"/>
</dbReference>
<dbReference type="SMR" id="Q8G381"/>
<dbReference type="GeneID" id="45051223"/>
<dbReference type="KEGG" id="bms:BR0069"/>
<dbReference type="KEGG" id="bsi:BS1330_I0069"/>
<dbReference type="PATRIC" id="fig|204722.22.peg.1764"/>
<dbReference type="HOGENOM" id="CLU_001600_4_0_5"/>
<dbReference type="PhylomeDB" id="Q8G381"/>
<dbReference type="Proteomes" id="UP000007104">
    <property type="component" value="Chromosome I"/>
</dbReference>
<dbReference type="GO" id="GO:0005737">
    <property type="term" value="C:cytoplasm"/>
    <property type="evidence" value="ECO:0007669"/>
    <property type="project" value="UniProtKB-SubCell"/>
</dbReference>
<dbReference type="GO" id="GO:0008408">
    <property type="term" value="F:3'-5' exonuclease activity"/>
    <property type="evidence" value="ECO:0007669"/>
    <property type="project" value="InterPro"/>
</dbReference>
<dbReference type="GO" id="GO:0003887">
    <property type="term" value="F:DNA-directed DNA polymerase activity"/>
    <property type="evidence" value="ECO:0007669"/>
    <property type="project" value="UniProtKB-UniRule"/>
</dbReference>
<dbReference type="GO" id="GO:0003676">
    <property type="term" value="F:nucleic acid binding"/>
    <property type="evidence" value="ECO:0007669"/>
    <property type="project" value="InterPro"/>
</dbReference>
<dbReference type="GO" id="GO:0006281">
    <property type="term" value="P:DNA repair"/>
    <property type="evidence" value="ECO:0007669"/>
    <property type="project" value="UniProtKB-UniRule"/>
</dbReference>
<dbReference type="GO" id="GO:0006260">
    <property type="term" value="P:DNA replication"/>
    <property type="evidence" value="ECO:0007669"/>
    <property type="project" value="UniProtKB-KW"/>
</dbReference>
<dbReference type="CDD" id="cd04485">
    <property type="entry name" value="DnaE_OBF"/>
    <property type="match status" value="1"/>
</dbReference>
<dbReference type="CDD" id="cd07434">
    <property type="entry name" value="PHP_PolIIIA_DnaE2"/>
    <property type="match status" value="1"/>
</dbReference>
<dbReference type="Gene3D" id="1.10.150.870">
    <property type="match status" value="1"/>
</dbReference>
<dbReference type="Gene3D" id="3.20.20.140">
    <property type="entry name" value="Metal-dependent hydrolases"/>
    <property type="match status" value="1"/>
</dbReference>
<dbReference type="Gene3D" id="2.40.50.140">
    <property type="entry name" value="Nucleic acid-binding proteins"/>
    <property type="match status" value="1"/>
</dbReference>
<dbReference type="HAMAP" id="MF_01902">
    <property type="entry name" value="DNApol_error_prone"/>
    <property type="match status" value="1"/>
</dbReference>
<dbReference type="InterPro" id="IPR011708">
    <property type="entry name" value="DNA_pol3_alpha_NTPase_dom"/>
</dbReference>
<dbReference type="InterPro" id="IPR040982">
    <property type="entry name" value="DNA_pol3_finger"/>
</dbReference>
<dbReference type="InterPro" id="IPR023073">
    <property type="entry name" value="DnaE2"/>
</dbReference>
<dbReference type="InterPro" id="IPR004805">
    <property type="entry name" value="DnaE2/DnaE/PolC"/>
</dbReference>
<dbReference type="InterPro" id="IPR029460">
    <property type="entry name" value="DNAPol_HHH"/>
</dbReference>
<dbReference type="InterPro" id="IPR012340">
    <property type="entry name" value="NA-bd_OB-fold"/>
</dbReference>
<dbReference type="InterPro" id="IPR004365">
    <property type="entry name" value="NA-bd_OB_tRNA"/>
</dbReference>
<dbReference type="InterPro" id="IPR004013">
    <property type="entry name" value="PHP_dom"/>
</dbReference>
<dbReference type="InterPro" id="IPR003141">
    <property type="entry name" value="Pol/His_phosphatase_N"/>
</dbReference>
<dbReference type="InterPro" id="IPR016195">
    <property type="entry name" value="Pol/histidinol_Pase-like"/>
</dbReference>
<dbReference type="NCBIfam" id="TIGR00594">
    <property type="entry name" value="polc"/>
    <property type="match status" value="1"/>
</dbReference>
<dbReference type="NCBIfam" id="NF004225">
    <property type="entry name" value="PRK05672.1"/>
    <property type="match status" value="1"/>
</dbReference>
<dbReference type="PANTHER" id="PTHR32294">
    <property type="entry name" value="DNA POLYMERASE III SUBUNIT ALPHA"/>
    <property type="match status" value="1"/>
</dbReference>
<dbReference type="PANTHER" id="PTHR32294:SF4">
    <property type="entry name" value="ERROR-PRONE DNA POLYMERASE"/>
    <property type="match status" value="1"/>
</dbReference>
<dbReference type="Pfam" id="PF07733">
    <property type="entry name" value="DNA_pol3_alpha"/>
    <property type="match status" value="1"/>
</dbReference>
<dbReference type="Pfam" id="PF17657">
    <property type="entry name" value="DNA_pol3_finger"/>
    <property type="match status" value="1"/>
</dbReference>
<dbReference type="Pfam" id="PF14579">
    <property type="entry name" value="HHH_6"/>
    <property type="match status" value="1"/>
</dbReference>
<dbReference type="Pfam" id="PF02811">
    <property type="entry name" value="PHP"/>
    <property type="match status" value="1"/>
</dbReference>
<dbReference type="Pfam" id="PF01336">
    <property type="entry name" value="tRNA_anti-codon"/>
    <property type="match status" value="1"/>
</dbReference>
<dbReference type="SMART" id="SM00481">
    <property type="entry name" value="POLIIIAc"/>
    <property type="match status" value="1"/>
</dbReference>
<dbReference type="SUPFAM" id="SSF89550">
    <property type="entry name" value="PHP domain-like"/>
    <property type="match status" value="1"/>
</dbReference>
<name>DNAE2_BRUSU</name>